<organism>
    <name type="scientific">Borreliella burgdorferi (strain ATCC 35210 / DSM 4680 / CIP 102532 / B31)</name>
    <name type="common">Borrelia burgdorferi</name>
    <dbReference type="NCBI Taxonomy" id="224326"/>
    <lineage>
        <taxon>Bacteria</taxon>
        <taxon>Pseudomonadati</taxon>
        <taxon>Spirochaetota</taxon>
        <taxon>Spirochaetia</taxon>
        <taxon>Spirochaetales</taxon>
        <taxon>Borreliaceae</taxon>
        <taxon>Borreliella</taxon>
    </lineage>
</organism>
<accession>O51044</accession>
<reference key="1">
    <citation type="journal article" date="1997" name="Nature">
        <title>Genomic sequence of a Lyme disease spirochaete, Borrelia burgdorferi.</title>
        <authorList>
            <person name="Fraser C.M."/>
            <person name="Casjens S."/>
            <person name="Huang W.M."/>
            <person name="Sutton G.G."/>
            <person name="Clayton R.A."/>
            <person name="Lathigra R."/>
            <person name="White O."/>
            <person name="Ketchum K.A."/>
            <person name="Dodson R.J."/>
            <person name="Hickey E.K."/>
            <person name="Gwinn M.L."/>
            <person name="Dougherty B.A."/>
            <person name="Tomb J.-F."/>
            <person name="Fleischmann R.D."/>
            <person name="Richardson D.L."/>
            <person name="Peterson J.D."/>
            <person name="Kerlavage A.R."/>
            <person name="Quackenbush J."/>
            <person name="Salzberg S.L."/>
            <person name="Hanson M."/>
            <person name="van Vugt R."/>
            <person name="Palmer N."/>
            <person name="Adams M.D."/>
            <person name="Gocayne J.D."/>
            <person name="Weidman J.F."/>
            <person name="Utterback T.R."/>
            <person name="Watthey L."/>
            <person name="McDonald L.A."/>
            <person name="Artiach P."/>
            <person name="Bowman C."/>
            <person name="Garland S.A."/>
            <person name="Fujii C."/>
            <person name="Cotton M.D."/>
            <person name="Horst K."/>
            <person name="Roberts K.M."/>
            <person name="Hatch B."/>
            <person name="Smith H.O."/>
            <person name="Venter J.C."/>
        </authorList>
    </citation>
    <scope>NUCLEOTIDE SEQUENCE [LARGE SCALE GENOMIC DNA]</scope>
    <source>
        <strain>ATCC 35210 / DSM 4680 / CIP 102532 / B31</strain>
    </source>
</reference>
<keyword id="KW-1185">Reference proteome</keyword>
<feature type="chain" id="PRO_0000174365" description="Uncharacterized protein BB_0011">
    <location>
        <begin position="1"/>
        <end position="279"/>
    </location>
</feature>
<name>Y011_BORBU</name>
<protein>
    <recommendedName>
        <fullName>Uncharacterized protein BB_0011</fullName>
    </recommendedName>
</protein>
<proteinExistence type="predicted"/>
<gene>
    <name type="ordered locus">BB_0011</name>
</gene>
<dbReference type="EMBL" id="AE000783">
    <property type="protein sequence ID" value="AAC66402.1"/>
    <property type="molecule type" value="Genomic_DNA"/>
</dbReference>
<dbReference type="PIR" id="C70101">
    <property type="entry name" value="C70101"/>
</dbReference>
<dbReference type="RefSeq" id="NP_212145.1">
    <property type="nucleotide sequence ID" value="NC_001318.1"/>
</dbReference>
<dbReference type="RefSeq" id="WP_002556618.1">
    <property type="nucleotide sequence ID" value="NC_001318.1"/>
</dbReference>
<dbReference type="STRING" id="224326.BB_0011"/>
<dbReference type="PaxDb" id="224326-BB_0011"/>
<dbReference type="EnsemblBacteria" id="AAC66402">
    <property type="protein sequence ID" value="AAC66402"/>
    <property type="gene ID" value="BB_0011"/>
</dbReference>
<dbReference type="KEGG" id="bbu:BB_0011"/>
<dbReference type="PATRIC" id="fig|224326.49.peg.409"/>
<dbReference type="HOGENOM" id="CLU_083032_0_0_12"/>
<dbReference type="OrthoDB" id="367491at2"/>
<dbReference type="Proteomes" id="UP000001807">
    <property type="component" value="Chromosome"/>
</dbReference>
<dbReference type="InterPro" id="IPR018708">
    <property type="entry name" value="DUF2225"/>
</dbReference>
<dbReference type="Pfam" id="PF09986">
    <property type="entry name" value="DUF2225"/>
    <property type="match status" value="1"/>
</dbReference>
<sequence>MKKISYFTKEKIECPVCSFKFQKEEFLTGSSRLIAGELKIDLKREYIKNDKYGNIYPRIYSITVCPKCYFAAFPSEFNSIPKNKKEILQNKKYERKKINTIFDNMLNFSKPRTLKEGAASYILAMLSYEHLEKNYNPTLNQAKSAIRAAWTFEDLEKEEPNKNYNYLQKIFYHKAAYLYKLVIEKDKDNSEPVSASTMFGPDTDKNYGYDSVLYLSGLLEYFYGNKDNKEYRYKQLNDIKTTLSKIAGMGKFSKEKPSILLDKIKEVYFKISKEMKNLK</sequence>